<name>DPOZ_DROME</name>
<dbReference type="EC" id="2.7.7.7" evidence="5"/>
<dbReference type="EMBL" id="AF298215">
    <property type="protein sequence ID" value="AAG30223.1"/>
    <property type="molecule type" value="mRNA"/>
</dbReference>
<dbReference type="EMBL" id="AE013599">
    <property type="protein sequence ID" value="AAF59191.2"/>
    <property type="molecule type" value="Genomic_DNA"/>
</dbReference>
<dbReference type="EMBL" id="AF298216">
    <property type="protein sequence ID" value="AAG30224.1"/>
    <property type="molecule type" value="Genomic_DNA"/>
</dbReference>
<dbReference type="EMBL" id="AY058689">
    <property type="protein sequence ID" value="AAL13918.1"/>
    <property type="molecule type" value="mRNA"/>
</dbReference>
<dbReference type="RefSeq" id="NP_524881.2">
    <property type="nucleotide sequence ID" value="NM_080142.3"/>
</dbReference>
<dbReference type="SMR" id="Q9GSR1"/>
<dbReference type="ComplexPortal" id="CPX-2426">
    <property type="entry name" value="DNA polymerase zeta complex"/>
</dbReference>
<dbReference type="FunCoup" id="Q9GSR1">
    <property type="interactions" value="1656"/>
</dbReference>
<dbReference type="IntAct" id="Q9GSR1">
    <property type="interactions" value="5"/>
</dbReference>
<dbReference type="STRING" id="7227.FBpp0087907"/>
<dbReference type="PaxDb" id="7227-FBpp0087907"/>
<dbReference type="EnsemblMetazoa" id="FBtr0088831">
    <property type="protein sequence ID" value="FBpp0087907"/>
    <property type="gene ID" value="FBgn0002891"/>
</dbReference>
<dbReference type="GeneID" id="47186"/>
<dbReference type="KEGG" id="dme:Dmel_CG1925"/>
<dbReference type="UCSC" id="CG1925-RA">
    <property type="organism name" value="d. melanogaster"/>
</dbReference>
<dbReference type="AGR" id="FB:FBgn0002891"/>
<dbReference type="CTD" id="47186"/>
<dbReference type="FlyBase" id="FBgn0002891">
    <property type="gene designation" value="PolZ1"/>
</dbReference>
<dbReference type="VEuPathDB" id="VectorBase:FBgn0002891"/>
<dbReference type="eggNOG" id="KOG0968">
    <property type="taxonomic scope" value="Eukaryota"/>
</dbReference>
<dbReference type="GeneTree" id="ENSGT00940000169521"/>
<dbReference type="HOGENOM" id="CLU_000203_3_1_1"/>
<dbReference type="InParanoid" id="Q9GSR1"/>
<dbReference type="OMA" id="CYSELRG"/>
<dbReference type="OrthoDB" id="2414538at2759"/>
<dbReference type="PhylomeDB" id="Q9GSR1"/>
<dbReference type="Reactome" id="R-DME-110312">
    <property type="pathway name" value="Translesion synthesis by REV1"/>
</dbReference>
<dbReference type="Reactome" id="R-DME-5655862">
    <property type="pathway name" value="Translesion synthesis by POLK"/>
</dbReference>
<dbReference type="Reactome" id="R-DME-5656121">
    <property type="pathway name" value="Translesion synthesis by POLI"/>
</dbReference>
<dbReference type="BioGRID-ORCS" id="47186">
    <property type="hits" value="0 hits in 3 CRISPR screens"/>
</dbReference>
<dbReference type="GenomeRNAi" id="47186"/>
<dbReference type="PRO" id="PR:Q9GSR1"/>
<dbReference type="Proteomes" id="UP000000803">
    <property type="component" value="Chromosome 2R"/>
</dbReference>
<dbReference type="Bgee" id="FBgn0002891">
    <property type="expression patterns" value="Expressed in intestinal stem cell (Drosophila) in digestive tract and 48 other cell types or tissues"/>
</dbReference>
<dbReference type="GO" id="GO:0005634">
    <property type="term" value="C:nucleus"/>
    <property type="evidence" value="ECO:0000318"/>
    <property type="project" value="GO_Central"/>
</dbReference>
<dbReference type="GO" id="GO:0016035">
    <property type="term" value="C:zeta DNA polymerase complex"/>
    <property type="evidence" value="ECO:0000353"/>
    <property type="project" value="FlyBase"/>
</dbReference>
<dbReference type="GO" id="GO:0003677">
    <property type="term" value="F:DNA binding"/>
    <property type="evidence" value="ECO:0007669"/>
    <property type="project" value="InterPro"/>
</dbReference>
<dbReference type="GO" id="GO:0003887">
    <property type="term" value="F:DNA-directed DNA polymerase activity"/>
    <property type="evidence" value="ECO:0000314"/>
    <property type="project" value="FlyBase"/>
</dbReference>
<dbReference type="GO" id="GO:0051536">
    <property type="term" value="F:iron-sulfur cluster binding"/>
    <property type="evidence" value="ECO:0007669"/>
    <property type="project" value="UniProtKB-KW"/>
</dbReference>
<dbReference type="GO" id="GO:0046872">
    <property type="term" value="F:metal ion binding"/>
    <property type="evidence" value="ECO:0007669"/>
    <property type="project" value="UniProtKB-KW"/>
</dbReference>
<dbReference type="GO" id="GO:0000166">
    <property type="term" value="F:nucleotide binding"/>
    <property type="evidence" value="ECO:0007669"/>
    <property type="project" value="InterPro"/>
</dbReference>
<dbReference type="GO" id="GO:0071897">
    <property type="term" value="P:DNA biosynthetic process"/>
    <property type="evidence" value="ECO:0000314"/>
    <property type="project" value="FlyBase"/>
</dbReference>
<dbReference type="GO" id="GO:0000731">
    <property type="term" value="P:DNA synthesis involved in DNA repair"/>
    <property type="evidence" value="ECO:0000314"/>
    <property type="project" value="FlyBase"/>
</dbReference>
<dbReference type="GO" id="GO:0043150">
    <property type="term" value="P:DNA synthesis involved in double-strand break repair via homologous recombination"/>
    <property type="evidence" value="ECO:0000315"/>
    <property type="project" value="FlyBase"/>
</dbReference>
<dbReference type="GO" id="GO:0000724">
    <property type="term" value="P:double-strand break repair via homologous recombination"/>
    <property type="evidence" value="ECO:0000318"/>
    <property type="project" value="GO_Central"/>
</dbReference>
<dbReference type="GO" id="GO:0019985">
    <property type="term" value="P:translesion synthesis"/>
    <property type="evidence" value="ECO:0007669"/>
    <property type="project" value="InterPro"/>
</dbReference>
<dbReference type="CDD" id="cd05778">
    <property type="entry name" value="DNA_polB_zeta_exo"/>
    <property type="match status" value="1"/>
</dbReference>
<dbReference type="CDD" id="cd05534">
    <property type="entry name" value="POLBc_zeta"/>
    <property type="match status" value="1"/>
</dbReference>
<dbReference type="FunFam" id="1.10.287.690:FF:000002">
    <property type="entry name" value="DNA polymerase zeta"/>
    <property type="match status" value="1"/>
</dbReference>
<dbReference type="FunFam" id="3.30.420.10:FF:000024">
    <property type="entry name" value="DNA polymerase zeta catalytic subunit"/>
    <property type="match status" value="1"/>
</dbReference>
<dbReference type="FunFam" id="3.30.342.10:FF:000002">
    <property type="entry name" value="DNA polymerase zeta catalytic subunit isoform X1"/>
    <property type="match status" value="1"/>
</dbReference>
<dbReference type="FunFam" id="1.10.132.60:FF:000005">
    <property type="entry name" value="Putative DNA polymerase zeta catalytic subunit"/>
    <property type="match status" value="1"/>
</dbReference>
<dbReference type="Gene3D" id="1.10.132.60">
    <property type="entry name" value="DNA polymerase family B, C-terminal domain"/>
    <property type="match status" value="1"/>
</dbReference>
<dbReference type="Gene3D" id="3.30.342.10">
    <property type="entry name" value="DNA Polymerase, chain B, domain 1"/>
    <property type="match status" value="1"/>
</dbReference>
<dbReference type="Gene3D" id="1.10.287.690">
    <property type="entry name" value="Helix hairpin bin"/>
    <property type="match status" value="1"/>
</dbReference>
<dbReference type="Gene3D" id="3.90.1600.10">
    <property type="entry name" value="Palm domain of DNA polymerase"/>
    <property type="match status" value="1"/>
</dbReference>
<dbReference type="Gene3D" id="3.30.420.10">
    <property type="entry name" value="Ribonuclease H-like superfamily/Ribonuclease H"/>
    <property type="match status" value="1"/>
</dbReference>
<dbReference type="InterPro" id="IPR006172">
    <property type="entry name" value="DNA-dir_DNA_pol_B"/>
</dbReference>
<dbReference type="InterPro" id="IPR017964">
    <property type="entry name" value="DNA-dir_DNA_pol_B_CS"/>
</dbReference>
<dbReference type="InterPro" id="IPR006133">
    <property type="entry name" value="DNA-dir_DNA_pol_B_exonuc"/>
</dbReference>
<dbReference type="InterPro" id="IPR006134">
    <property type="entry name" value="DNA-dir_DNA_pol_B_multi_dom"/>
</dbReference>
<dbReference type="InterPro" id="IPR043502">
    <property type="entry name" value="DNA/RNA_pol_sf"/>
</dbReference>
<dbReference type="InterPro" id="IPR042087">
    <property type="entry name" value="DNA_pol_B_thumb"/>
</dbReference>
<dbReference type="InterPro" id="IPR023211">
    <property type="entry name" value="DNA_pol_palm_dom_sf"/>
</dbReference>
<dbReference type="InterPro" id="IPR056435">
    <property type="entry name" value="DPOD/Z_N"/>
</dbReference>
<dbReference type="InterPro" id="IPR030559">
    <property type="entry name" value="PolZ_Rev3"/>
</dbReference>
<dbReference type="InterPro" id="IPR056447">
    <property type="entry name" value="REV3_N"/>
</dbReference>
<dbReference type="InterPro" id="IPR012337">
    <property type="entry name" value="RNaseH-like_sf"/>
</dbReference>
<dbReference type="InterPro" id="IPR036397">
    <property type="entry name" value="RNaseH_sf"/>
</dbReference>
<dbReference type="InterPro" id="IPR025687">
    <property type="entry name" value="Znf-C4pol"/>
</dbReference>
<dbReference type="PANTHER" id="PTHR45812">
    <property type="entry name" value="DNA POLYMERASE ZETA CATALYTIC SUBUNIT"/>
    <property type="match status" value="1"/>
</dbReference>
<dbReference type="PANTHER" id="PTHR45812:SF1">
    <property type="entry name" value="DNA POLYMERASE ZETA CATALYTIC SUBUNIT"/>
    <property type="match status" value="1"/>
</dbReference>
<dbReference type="Pfam" id="PF00136">
    <property type="entry name" value="DNA_pol_B"/>
    <property type="match status" value="1"/>
</dbReference>
<dbReference type="Pfam" id="PF03104">
    <property type="entry name" value="DNA_pol_B_exo1"/>
    <property type="match status" value="1"/>
</dbReference>
<dbReference type="Pfam" id="PF24055">
    <property type="entry name" value="POL3_N"/>
    <property type="match status" value="1"/>
</dbReference>
<dbReference type="Pfam" id="PF24065">
    <property type="entry name" value="REV3_N"/>
    <property type="match status" value="1"/>
</dbReference>
<dbReference type="Pfam" id="PF14260">
    <property type="entry name" value="zf-C4pol"/>
    <property type="match status" value="1"/>
</dbReference>
<dbReference type="PRINTS" id="PR00106">
    <property type="entry name" value="DNAPOLB"/>
</dbReference>
<dbReference type="SMART" id="SM00486">
    <property type="entry name" value="POLBc"/>
    <property type="match status" value="1"/>
</dbReference>
<dbReference type="SUPFAM" id="SSF56672">
    <property type="entry name" value="DNA/RNA polymerases"/>
    <property type="match status" value="1"/>
</dbReference>
<dbReference type="SUPFAM" id="SSF53098">
    <property type="entry name" value="Ribonuclease H-like"/>
    <property type="match status" value="1"/>
</dbReference>
<dbReference type="PROSITE" id="PS00116">
    <property type="entry name" value="DNA_POLYMERASE_B"/>
    <property type="match status" value="1"/>
</dbReference>
<proteinExistence type="evidence at protein level"/>
<reference evidence="12" key="1">
    <citation type="journal article" date="2001" name="Mutat. Res.">
        <title>Isolation and genetic characterisation of the Drosophila homologue of (SCE)REV3, encoding the catalytic subunit of DNA polymerase zeta.</title>
        <authorList>
            <person name="Eeken J.C."/>
            <person name="Romeijn R.J."/>
            <person name="de Jong A.W."/>
            <person name="Pastink A."/>
            <person name="Lohman P.H."/>
        </authorList>
    </citation>
    <scope>NUCLEOTIDE SEQUENCE [MRNA]</scope>
    <scope>FUNCTION</scope>
    <scope>MUTAGENESIS OF 16-LEU--GLY-2130</scope>
</reference>
<reference evidence="15" key="2">
    <citation type="journal article" date="2000" name="Science">
        <title>The genome sequence of Drosophila melanogaster.</title>
        <authorList>
            <person name="Adams M.D."/>
            <person name="Celniker S.E."/>
            <person name="Holt R.A."/>
            <person name="Evans C.A."/>
            <person name="Gocayne J.D."/>
            <person name="Amanatides P.G."/>
            <person name="Scherer S.E."/>
            <person name="Li P.W."/>
            <person name="Hoskins R.A."/>
            <person name="Galle R.F."/>
            <person name="George R.A."/>
            <person name="Lewis S.E."/>
            <person name="Richards S."/>
            <person name="Ashburner M."/>
            <person name="Henderson S.N."/>
            <person name="Sutton G.G."/>
            <person name="Wortman J.R."/>
            <person name="Yandell M.D."/>
            <person name="Zhang Q."/>
            <person name="Chen L.X."/>
            <person name="Brandon R.C."/>
            <person name="Rogers Y.-H.C."/>
            <person name="Blazej R.G."/>
            <person name="Champe M."/>
            <person name="Pfeiffer B.D."/>
            <person name="Wan K.H."/>
            <person name="Doyle C."/>
            <person name="Baxter E.G."/>
            <person name="Helt G."/>
            <person name="Nelson C.R."/>
            <person name="Miklos G.L.G."/>
            <person name="Abril J.F."/>
            <person name="Agbayani A."/>
            <person name="An H.-J."/>
            <person name="Andrews-Pfannkoch C."/>
            <person name="Baldwin D."/>
            <person name="Ballew R.M."/>
            <person name="Basu A."/>
            <person name="Baxendale J."/>
            <person name="Bayraktaroglu L."/>
            <person name="Beasley E.M."/>
            <person name="Beeson K.Y."/>
            <person name="Benos P.V."/>
            <person name="Berman B.P."/>
            <person name="Bhandari D."/>
            <person name="Bolshakov S."/>
            <person name="Borkova D."/>
            <person name="Botchan M.R."/>
            <person name="Bouck J."/>
            <person name="Brokstein P."/>
            <person name="Brottier P."/>
            <person name="Burtis K.C."/>
            <person name="Busam D.A."/>
            <person name="Butler H."/>
            <person name="Cadieu E."/>
            <person name="Center A."/>
            <person name="Chandra I."/>
            <person name="Cherry J.M."/>
            <person name="Cawley S."/>
            <person name="Dahlke C."/>
            <person name="Davenport L.B."/>
            <person name="Davies P."/>
            <person name="de Pablos B."/>
            <person name="Delcher A."/>
            <person name="Deng Z."/>
            <person name="Mays A.D."/>
            <person name="Dew I."/>
            <person name="Dietz S.M."/>
            <person name="Dodson K."/>
            <person name="Doup L.E."/>
            <person name="Downes M."/>
            <person name="Dugan-Rocha S."/>
            <person name="Dunkov B.C."/>
            <person name="Dunn P."/>
            <person name="Durbin K.J."/>
            <person name="Evangelista C.C."/>
            <person name="Ferraz C."/>
            <person name="Ferriera S."/>
            <person name="Fleischmann W."/>
            <person name="Fosler C."/>
            <person name="Gabrielian A.E."/>
            <person name="Garg N.S."/>
            <person name="Gelbart W.M."/>
            <person name="Glasser K."/>
            <person name="Glodek A."/>
            <person name="Gong F."/>
            <person name="Gorrell J.H."/>
            <person name="Gu Z."/>
            <person name="Guan P."/>
            <person name="Harris M."/>
            <person name="Harris N.L."/>
            <person name="Harvey D.A."/>
            <person name="Heiman T.J."/>
            <person name="Hernandez J.R."/>
            <person name="Houck J."/>
            <person name="Hostin D."/>
            <person name="Houston K.A."/>
            <person name="Howland T.J."/>
            <person name="Wei M.-H."/>
            <person name="Ibegwam C."/>
            <person name="Jalali M."/>
            <person name="Kalush F."/>
            <person name="Karpen G.H."/>
            <person name="Ke Z."/>
            <person name="Kennison J.A."/>
            <person name="Ketchum K.A."/>
            <person name="Kimmel B.E."/>
            <person name="Kodira C.D."/>
            <person name="Kraft C.L."/>
            <person name="Kravitz S."/>
            <person name="Kulp D."/>
            <person name="Lai Z."/>
            <person name="Lasko P."/>
            <person name="Lei Y."/>
            <person name="Levitsky A.A."/>
            <person name="Li J.H."/>
            <person name="Li Z."/>
            <person name="Liang Y."/>
            <person name="Lin X."/>
            <person name="Liu X."/>
            <person name="Mattei B."/>
            <person name="McIntosh T.C."/>
            <person name="McLeod M.P."/>
            <person name="McPherson D."/>
            <person name="Merkulov G."/>
            <person name="Milshina N.V."/>
            <person name="Mobarry C."/>
            <person name="Morris J."/>
            <person name="Moshrefi A."/>
            <person name="Mount S.M."/>
            <person name="Moy M."/>
            <person name="Murphy B."/>
            <person name="Murphy L."/>
            <person name="Muzny D.M."/>
            <person name="Nelson D.L."/>
            <person name="Nelson D.R."/>
            <person name="Nelson K.A."/>
            <person name="Nixon K."/>
            <person name="Nusskern D.R."/>
            <person name="Pacleb J.M."/>
            <person name="Palazzolo M."/>
            <person name="Pittman G.S."/>
            <person name="Pan S."/>
            <person name="Pollard J."/>
            <person name="Puri V."/>
            <person name="Reese M.G."/>
            <person name="Reinert K."/>
            <person name="Remington K."/>
            <person name="Saunders R.D.C."/>
            <person name="Scheeler F."/>
            <person name="Shen H."/>
            <person name="Shue B.C."/>
            <person name="Siden-Kiamos I."/>
            <person name="Simpson M."/>
            <person name="Skupski M.P."/>
            <person name="Smith T.J."/>
            <person name="Spier E."/>
            <person name="Spradling A.C."/>
            <person name="Stapleton M."/>
            <person name="Strong R."/>
            <person name="Sun E."/>
            <person name="Svirskas R."/>
            <person name="Tector C."/>
            <person name="Turner R."/>
            <person name="Venter E."/>
            <person name="Wang A.H."/>
            <person name="Wang X."/>
            <person name="Wang Z.-Y."/>
            <person name="Wassarman D.A."/>
            <person name="Weinstock G.M."/>
            <person name="Weissenbach J."/>
            <person name="Williams S.M."/>
            <person name="Woodage T."/>
            <person name="Worley K.C."/>
            <person name="Wu D."/>
            <person name="Yang S."/>
            <person name="Yao Q.A."/>
            <person name="Ye J."/>
            <person name="Yeh R.-F."/>
            <person name="Zaveri J.S."/>
            <person name="Zhan M."/>
            <person name="Zhang G."/>
            <person name="Zhao Q."/>
            <person name="Zheng L."/>
            <person name="Zheng X.H."/>
            <person name="Zhong F.N."/>
            <person name="Zhong W."/>
            <person name="Zhou X."/>
            <person name="Zhu S.C."/>
            <person name="Zhu X."/>
            <person name="Smith H.O."/>
            <person name="Gibbs R.A."/>
            <person name="Myers E.W."/>
            <person name="Rubin G.M."/>
            <person name="Venter J.C."/>
        </authorList>
    </citation>
    <scope>NUCLEOTIDE SEQUENCE [LARGE SCALE GENOMIC DNA]</scope>
    <source>
        <strain>Berkeley</strain>
    </source>
</reference>
<reference evidence="15" key="3">
    <citation type="journal article" date="2002" name="Genome Biol.">
        <title>Annotation of the Drosophila melanogaster euchromatic genome: a systematic review.</title>
        <authorList>
            <person name="Misra S."/>
            <person name="Crosby M.A."/>
            <person name="Mungall C.J."/>
            <person name="Matthews B.B."/>
            <person name="Campbell K.S."/>
            <person name="Hradecky P."/>
            <person name="Huang Y."/>
            <person name="Kaminker J.S."/>
            <person name="Millburn G.H."/>
            <person name="Prochnik S.E."/>
            <person name="Smith C.D."/>
            <person name="Tupy J.L."/>
            <person name="Whitfield E.J."/>
            <person name="Bayraktaroglu L."/>
            <person name="Berman B.P."/>
            <person name="Bettencourt B.R."/>
            <person name="Celniker S.E."/>
            <person name="de Grey A.D.N.J."/>
            <person name="Drysdale R.A."/>
            <person name="Harris N.L."/>
            <person name="Richter J."/>
            <person name="Russo S."/>
            <person name="Schroeder A.J."/>
            <person name="Shu S.Q."/>
            <person name="Stapleton M."/>
            <person name="Yamada C."/>
            <person name="Ashburner M."/>
            <person name="Gelbart W.M."/>
            <person name="Rubin G.M."/>
            <person name="Lewis S.E."/>
        </authorList>
    </citation>
    <scope>GENOME REANNOTATION</scope>
    <source>
        <strain>Berkeley</strain>
    </source>
</reference>
<reference evidence="13" key="4">
    <citation type="submission" date="2001-10" db="EMBL/GenBank/DDBJ databases">
        <authorList>
            <person name="Stapleton M."/>
            <person name="Brokstein P."/>
            <person name="Hong L."/>
            <person name="Agbayani A."/>
            <person name="Carlson J."/>
            <person name="Champe M."/>
            <person name="Chavez C."/>
            <person name="Dorsett V."/>
            <person name="Farfan D."/>
            <person name="Frise E."/>
            <person name="George R."/>
            <person name="Gonzalez M."/>
            <person name="Guarin H."/>
            <person name="Li P."/>
            <person name="Liao G."/>
            <person name="Miranda A."/>
            <person name="Mungall C.J."/>
            <person name="Nunoo J."/>
            <person name="Pacleb J."/>
            <person name="Paragas V."/>
            <person name="Park S."/>
            <person name="Phouanenavong S."/>
            <person name="Wan K."/>
            <person name="Yu C."/>
            <person name="Lewis S.E."/>
            <person name="Rubin G.M."/>
            <person name="Celniker S."/>
        </authorList>
    </citation>
    <scope>NUCLEOTIDE SEQUENCE [LARGE SCALE MRNA] OF 739-2130</scope>
    <source>
        <strain evidence="13">Berkeley</strain>
    </source>
</reference>
<reference evidence="10" key="5">
    <citation type="journal article" date="2004" name="Biochem. J.">
        <title>Purification of Drosophila DNA polymerase zeta by REV1 protein-affinity chromatography.</title>
        <authorList>
            <person name="Takeuchi R."/>
            <person name="Oshige M."/>
            <person name="Uchida M."/>
            <person name="Ishikawa G."/>
            <person name="Takata K."/>
            <person name="Shimanouchi K."/>
            <person name="Kanai Y."/>
            <person name="Ruike T."/>
            <person name="Morioka H."/>
            <person name="Sakaguchi K."/>
        </authorList>
    </citation>
    <scope>FUNCTION</scope>
    <scope>CATALYTIC ACTIVITY</scope>
    <scope>ACTIVITY REGULATION</scope>
    <scope>IDENTIFICATION IN THE DNA POLYMERASE ZETA COMPLEX</scope>
    <scope>DEVELOPMENTAL STAGE</scope>
</reference>
<reference evidence="10" key="6">
    <citation type="journal article" date="2006" name="J. Biol. Chem.">
        <title>Drosophila DNA polymerase zeta interacts with recombination repair protein 1, the Drosophila homologue of human abasic endonuclease 1.</title>
        <authorList>
            <person name="Takeuchi R."/>
            <person name="Ruike T."/>
            <person name="Nakamura R."/>
            <person name="Shimanouchi K."/>
            <person name="Kanai Y."/>
            <person name="Abe Y."/>
            <person name="Ihara A."/>
            <person name="Sakaguchi K."/>
        </authorList>
    </citation>
    <scope>FUNCTION</scope>
    <scope>IDENTIFICATION IN THE DNA POLYMERASE ZETA COMPLEX</scope>
    <scope>INTERACTION WITH RRP1</scope>
    <scope>DEVELOPMENTAL STAGE</scope>
</reference>
<reference evidence="10" key="7">
    <citation type="journal article" date="2012" name="PLoS Genet.">
        <title>Competition between replicative and translesion polymerases during homologous recombination repair in Drosophila.</title>
        <authorList>
            <person name="Kane D.P."/>
            <person name="Shusterman M."/>
            <person name="Rong Y."/>
            <person name="McVey M."/>
        </authorList>
    </citation>
    <scope>FUNCTION</scope>
</reference>
<accession>Q9GSR1</accession>
<accession>Q95TM2</accession>
<accession>Q9GSR2</accession>
<accession>Q9V319</accession>
<evidence type="ECO:0000250" key="1">
    <source>
        <dbReference type="UniProtKB" id="P14284"/>
    </source>
</evidence>
<evidence type="ECO:0000250" key="2">
    <source>
        <dbReference type="UniProtKB" id="P15436"/>
    </source>
</evidence>
<evidence type="ECO:0000256" key="3">
    <source>
        <dbReference type="SAM" id="MobiDB-lite"/>
    </source>
</evidence>
<evidence type="ECO:0000269" key="4">
    <source>
    </source>
</evidence>
<evidence type="ECO:0000269" key="5">
    <source>
    </source>
</evidence>
<evidence type="ECO:0000269" key="6">
    <source>
    </source>
</evidence>
<evidence type="ECO:0000269" key="7">
    <source>
    </source>
</evidence>
<evidence type="ECO:0000303" key="8">
    <source>
    </source>
</evidence>
<evidence type="ECO:0000303" key="9">
    <source>
    </source>
</evidence>
<evidence type="ECO:0000305" key="10"/>
<evidence type="ECO:0000312" key="11">
    <source>
        <dbReference type="EMBL" id="AAF59191.2"/>
    </source>
</evidence>
<evidence type="ECO:0000312" key="12">
    <source>
        <dbReference type="EMBL" id="AAG30223.1"/>
    </source>
</evidence>
<evidence type="ECO:0000312" key="13">
    <source>
        <dbReference type="EMBL" id="AAL13918.1"/>
    </source>
</evidence>
<evidence type="ECO:0000312" key="14">
    <source>
        <dbReference type="FlyBase" id="FBgn0002891"/>
    </source>
</evidence>
<evidence type="ECO:0000312" key="15">
    <source>
        <dbReference type="Proteomes" id="UP000000803"/>
    </source>
</evidence>
<keyword id="KW-0227">DNA damage</keyword>
<keyword id="KW-0234">DNA repair</keyword>
<keyword id="KW-0237">DNA synthesis</keyword>
<keyword id="KW-0239">DNA-directed DNA polymerase</keyword>
<keyword id="KW-0408">Iron</keyword>
<keyword id="KW-0411">Iron-sulfur</keyword>
<keyword id="KW-0479">Metal-binding</keyword>
<keyword id="KW-0548">Nucleotidyltransferase</keyword>
<keyword id="KW-1185">Reference proteome</keyword>
<keyword id="KW-0808">Transferase</keyword>
<keyword id="KW-0862">Zinc</keyword>
<protein>
    <recommendedName>
        <fullName evidence="14">DNA polymerase zeta catalytic subunit</fullName>
        <ecNumber evidence="5">2.7.7.7</ecNumber>
    </recommendedName>
</protein>
<comment type="function">
    <text evidence="4 5 6 7">As the catalytic subunit of the DNA polymerase zeta complex, plays a crucial role in translesion DNA synthesis (TLS) and various DNA repair mechanisms (PubMed:11267835, PubMed:15175013, PubMed:16507570, PubMed:22532806). Lacks an intrinsic 3'-5' exonuclease activity and thus has no proofreading function (PubMed:15175013). During homologous recombination (HR) repair, has a overlapping role with the error-prone translesion polymerase eta to initiate repair synthesis which is completed by end joining or another polymerase that can bind and reinitiate synthesis (PubMed:22532806). May participate in the Rrp1-dependent base excision repair (BER) pathway responsible for repair of DNA lesions that gives rise to apurinic/apyrimidinic (AP) sites (PubMed:16507570). Unlike mammalian orthologs, it is not an error-prone polymerase (PubMed:15175013).</text>
</comment>
<comment type="catalytic activity">
    <reaction evidence="5">
        <text>DNA(n) + a 2'-deoxyribonucleoside 5'-triphosphate = DNA(n+1) + diphosphate</text>
        <dbReference type="Rhea" id="RHEA:22508"/>
        <dbReference type="Rhea" id="RHEA-COMP:17339"/>
        <dbReference type="Rhea" id="RHEA-COMP:17340"/>
        <dbReference type="ChEBI" id="CHEBI:33019"/>
        <dbReference type="ChEBI" id="CHEBI:61560"/>
        <dbReference type="ChEBI" id="CHEBI:173112"/>
        <dbReference type="EC" id="2.7.7.7"/>
    </reaction>
</comment>
<comment type="cofactor">
    <cofactor evidence="1">
        <name>[4Fe-4S] cluster</name>
        <dbReference type="ChEBI" id="CHEBI:49883"/>
    </cofactor>
    <text evidence="1">Binds 1 [4Fe-4S] cluster.</text>
</comment>
<comment type="activity regulation">
    <text evidence="5">Inhibited by tetracyclic diterpene antibiotic aphidicolin.</text>
</comment>
<comment type="subunit">
    <text evidence="5 6">Catalytic subunit of the zeta DNA polymerase complex, which consists of PolZ1/DNApol-zeta and the accessory component PolZ2/Rev7 (PubMed:15175013, PubMed:16507570). Interacts with the apurinic/apyrimidinic (AP) endonuclease Rrp1; the interaction is likely indirect and mediated via PolZ2 (PubMed:16507570).</text>
</comment>
<comment type="developmental stage">
    <text evidence="5 6">Expressed in embryos (at protein level) (PubMed:15175013). Expressed throughout development, with highest levels of expression in 0-8 hour embryos and adult females (PubMed:16507570).</text>
</comment>
<comment type="similarity">
    <text evidence="10">Belongs to the DNA polymerase type-B family.</text>
</comment>
<organism evidence="15">
    <name type="scientific">Drosophila melanogaster</name>
    <name type="common">Fruit fly</name>
    <dbReference type="NCBI Taxonomy" id="7227"/>
    <lineage>
        <taxon>Eukaryota</taxon>
        <taxon>Metazoa</taxon>
        <taxon>Ecdysozoa</taxon>
        <taxon>Arthropoda</taxon>
        <taxon>Hexapoda</taxon>
        <taxon>Insecta</taxon>
        <taxon>Pterygota</taxon>
        <taxon>Neoptera</taxon>
        <taxon>Endopterygota</taxon>
        <taxon>Diptera</taxon>
        <taxon>Brachycera</taxon>
        <taxon>Muscomorpha</taxon>
        <taxon>Ephydroidea</taxon>
        <taxon>Drosophilidae</taxon>
        <taxon>Drosophila</taxon>
        <taxon>Sophophora</taxon>
    </lineage>
</organism>
<sequence length="2130" mass="240073">MAAAGEAIDGVYSVRLVIADFYMEKPQFGMDPCYSELRGKEIKRVPVIRVFGGNSRGQKTCMHVHGVFPYLYIPYDKKDFESLERGILQMAMHLDKAINISLGQGSSNAQHVFKIQLVKGIPFYGYHRVEHQFLKIYMFNPRFVRRAANLLQSGAILSKNFSPHESHVPYILQFMIDYNLYGMSYVHVPLEVLKFRRNHDDDVIPYANVKQAQLLDITTAKKVACSALEVDVSSNFILNRFQLVAKSKSNHTNPGIEAIWNDEKLRRQKLVEKHTDAGDEEKAEAVPVLELPPTQERHQIEIAESDIFYRTALESKLMTLEQSTLSEQTLSDQTILPQATMQTTMPGTKAQKRRFNLQKLLANAVYPEECSQDQQQLLVNASFIQNHVTCGYSSSVSLSTSKDESDDLDETVVDEELILSLTQPHGAIPHDATLREEDLELLDALQLLEEQNESESHVDLDSSLAPLSQHKKFELTPELLDKETAATAALFDEDVDSDEDADQETRHDFSTVLDDVDELLLKLTQSQPAESKELKASSKLPQIDGADDRLQRTPIKSISSKSKSSPSKTPTTPIGQKSLPKSPRTPKTSAAKKYAPLALTIGSSSSKKSNDEFAGRPSNPRLSLQLDQGTGTGTLRPEISLRKKLAMSEMRRKSFEDSFVLLKNDCTPVRSTRRSTSNLDKTHIICSLTPRDRNPGLSDMFETEDGKQLPPKKVVRKTRWSTRNQDIESLPKAGCEIERPHRSEGSALDELKPRRSARHKVNSANPDECSSEIQTTGPRVTTTSLDRPQKKARLSQSPKENTKTSMNGTVALEKATKDSSSNSESPHQQENSVSEQIEYLESKPKKSDETARSCDEKLQRELIPQEPAGISPGDSANSTEEITFSPCHDEAIESDTESDYIVTKLRKTPNLKRLRWSIRSELLNKQFTPSSGIRPPETETTPQLSPKSNESNTPELMRSFYEHSLIVNSPSVFSDFLDSPEIHMDSPRSAPPSPDSNSFVIAPLELPPSYDEVVSGSRKMDIPEYEFQKPYYSNPSDVSKVTEVGFLVLHIPGNKLNDCDPFQSILGNDRGLASWRRRQLIAIGGLAMLQRHRGEQKVREYFSTQQRIAIEPAQLAPTWQEAKIWLKAKELLRQREEPKKSSDDIDSPIKIKRQKITMMLQAEEGDGGSGDEDAGEELDCSLSLTPLSQAKDKCKATPTSSKARETGKSRLKRGTRLSFIGSQDEEPPSSQSSEQSVSSSAAQAELDRSSFLRQLEGSSQDRQHDLSFGLSHATLDNTFGFKVNLENLQQAKADIDCNHLTIITLEVFVSTRGDLQPDPMHDEIRCLFYAIEHSLPDEKLPSKACGYIMVNTVQDLLSEGPFHGIDRDIEVQVVTSEAEAFEALLALCERWDADIYAGYEIEMSSWGYVIDRAKHLCFNIAPLLSRVPTQKVRDFVDEDREQFTDLDVEMKLCGRILLDVWRLMRSEIALTSYTFENVMYHILHKRCPWHTAKSLTEWFGSPCTRWIVMEYYLERVRGTLTLLDQLDLLGRTSEMAKLIGIQFYEVLSRGSQFRVESMMLRIAKPKNLVPLSPSVQARAHMRAPEYLALIMEPQSRFYADPLIVLDFQSLYPSMIIAYNYCFSTCLGRVEHLGGSSPFEFGASQLRVSRQMLQKLLEHDLVTVSPCGVVFVKREVREGILPRMLTEILDTRQMVKQSMKLHKDSSALQRILHSRQLGLKLMANVTYGYTAANFSGRMPSVEVGDSVVSKGRETLERAIKLVENNEEWKVRVVYGDTDSMFVLVPGRNRAEAFRIGEEIAKAVTEMNPQPVKLKLEKVYQPCMLQTKKRYVGYMYETADQEQPVYEAKGIETVRRDGCPAVAKMLEKVLRILFETQDVSKIKAYVCRQFTKLLSGRANLQDLIFAKEFRGLNGYKPTACVPALELTRKWMQKDPRHVPRRGERVPFIIVNGPPGMQLIRLVRSPHDILANEGHKINAIYYITKAIIPPLNRCLLLIGANVHDWFASLPRKLLMTPAVGTANELAGARGAKSTISQYFSTTSCVIDCGRQTKAGICPDCLKNATTCVVVLSDKTARLERGYQLTRQICQACCGRLGSLQCDSLDCPVLYVLEGKRRELQQIEHWNKLLEHHF</sequence>
<feature type="chain" id="PRO_0000448742" description="DNA polymerase zeta catalytic subunit">
    <location>
        <begin position="1"/>
        <end position="2130"/>
    </location>
</feature>
<feature type="region of interest" description="Disordered" evidence="3">
    <location>
        <begin position="528"/>
        <end position="635"/>
    </location>
</feature>
<feature type="region of interest" description="Disordered" evidence="3">
    <location>
        <begin position="734"/>
        <end position="891"/>
    </location>
</feature>
<feature type="region of interest" description="Disordered" evidence="3">
    <location>
        <begin position="927"/>
        <end position="954"/>
    </location>
</feature>
<feature type="region of interest" description="Disordered" evidence="3">
    <location>
        <begin position="1189"/>
        <end position="1243"/>
    </location>
</feature>
<feature type="short sequence motif" description="CysB motif" evidence="2">
    <location>
        <begin position="2086"/>
        <end position="2103"/>
    </location>
</feature>
<feature type="compositionally biased region" description="Low complexity" evidence="3">
    <location>
        <begin position="553"/>
        <end position="574"/>
    </location>
</feature>
<feature type="compositionally biased region" description="Polar residues" evidence="3">
    <location>
        <begin position="620"/>
        <end position="629"/>
    </location>
</feature>
<feature type="compositionally biased region" description="Basic and acidic residues" evidence="3">
    <location>
        <begin position="735"/>
        <end position="753"/>
    </location>
</feature>
<feature type="compositionally biased region" description="Polar residues" evidence="3">
    <location>
        <begin position="771"/>
        <end position="786"/>
    </location>
</feature>
<feature type="compositionally biased region" description="Polar residues" evidence="3">
    <location>
        <begin position="794"/>
        <end position="808"/>
    </location>
</feature>
<feature type="compositionally biased region" description="Polar residues" evidence="3">
    <location>
        <begin position="818"/>
        <end position="835"/>
    </location>
</feature>
<feature type="compositionally biased region" description="Basic and acidic residues" evidence="3">
    <location>
        <begin position="840"/>
        <end position="860"/>
    </location>
</feature>
<feature type="compositionally biased region" description="Polar residues" evidence="3">
    <location>
        <begin position="938"/>
        <end position="954"/>
    </location>
</feature>
<feature type="compositionally biased region" description="Low complexity" evidence="3">
    <location>
        <begin position="1228"/>
        <end position="1243"/>
    </location>
</feature>
<feature type="binding site" evidence="2">
    <location>
        <position position="2041"/>
    </location>
    <ligand>
        <name>Zn(2+)</name>
        <dbReference type="ChEBI" id="CHEBI:29105"/>
    </ligand>
</feature>
<feature type="binding site" evidence="2">
    <location>
        <position position="2045"/>
    </location>
    <ligand>
        <name>Zn(2+)</name>
        <dbReference type="ChEBI" id="CHEBI:29105"/>
    </ligand>
</feature>
<feature type="binding site" evidence="2">
    <location>
        <position position="2054"/>
    </location>
    <ligand>
        <name>Zn(2+)</name>
        <dbReference type="ChEBI" id="CHEBI:29105"/>
    </ligand>
</feature>
<feature type="binding site" evidence="2">
    <location>
        <position position="2057"/>
    </location>
    <ligand>
        <name>Zn(2+)</name>
        <dbReference type="ChEBI" id="CHEBI:29105"/>
    </ligand>
</feature>
<feature type="binding site" evidence="2">
    <location>
        <position position="2086"/>
    </location>
    <ligand>
        <name>[4Fe-4S] cluster</name>
        <dbReference type="ChEBI" id="CHEBI:49883"/>
    </ligand>
</feature>
<feature type="binding site" evidence="2">
    <location>
        <position position="2089"/>
    </location>
    <ligand>
        <name>[4Fe-4S] cluster</name>
        <dbReference type="ChEBI" id="CHEBI:49883"/>
    </ligand>
</feature>
<feature type="binding site" evidence="2">
    <location>
        <position position="2098"/>
    </location>
    <ligand>
        <name>[4Fe-4S] cluster</name>
        <dbReference type="ChEBI" id="CHEBI:49883"/>
    </ligand>
</feature>
<feature type="binding site" evidence="2">
    <location>
        <position position="2103"/>
    </location>
    <ligand>
        <name>[4Fe-4S] cluster</name>
        <dbReference type="ChEBI" id="CHEBI:49883"/>
    </ligand>
</feature>
<feature type="mutagenesis site" description="In mus205; hypersensitive to alkylating agents and UV, but not sensitive to ionising radiation. In somatic cells, no effect on methyl methane sulfonate-induced mutations and homologous recombination. In germ cells, no effect on mutability by X-rays, NQO and alkylating agents." evidence="4">
    <location>
        <begin position="14"/>
        <end position="2130"/>
    </location>
</feature>
<feature type="sequence conflict" description="In Ref. 1; AAG30223." evidence="10" ref="1">
    <original>M</original>
    <variation>V</variation>
    <location>
        <position position="92"/>
    </location>
</feature>
<feature type="sequence conflict" description="In Ref. 1; AAG30223." evidence="10" ref="1">
    <original>A</original>
    <variation>V</variation>
    <location>
        <position position="339"/>
    </location>
</feature>
<feature type="sequence conflict" description="In Ref. 1; AAG30223." evidence="10" ref="1">
    <original>S</original>
    <variation>N</variation>
    <location>
        <position position="394"/>
    </location>
</feature>
<feature type="sequence conflict" description="In Ref. 1; AAG30223." evidence="10" ref="1">
    <original>A</original>
    <variation>V</variation>
    <location>
        <position position="536"/>
    </location>
</feature>
<feature type="sequence conflict" description="In Ref. 1; AAG30223." evidence="10" ref="1">
    <original>R</original>
    <variation>H</variation>
    <location>
        <position position="584"/>
    </location>
</feature>
<feature type="sequence conflict" description="In Ref. 1; AAG30223." evidence="10" ref="1">
    <original>S</original>
    <variation>R</variation>
    <location>
        <position position="677"/>
    </location>
</feature>
<feature type="sequence conflict" description="In Ref. 1; AAG30223." evidence="10" ref="1">
    <original>C</original>
    <variation>R</variation>
    <location>
        <position position="854"/>
    </location>
</feature>
<feature type="sequence conflict" description="In Ref. 1; AAG30223." evidence="10" ref="1">
    <original>C</original>
    <variation>S</variation>
    <location>
        <position position="887"/>
    </location>
</feature>
<feature type="sequence conflict" description="In Ref. 1; AAG30223." evidence="10" ref="1">
    <original>D</original>
    <variation>G</variation>
    <location>
        <position position="1021"/>
    </location>
</feature>
<feature type="sequence conflict" description="In Ref. 1; AAG30223." evidence="10" ref="1">
    <original>E</original>
    <variation>D</variation>
    <location>
        <position position="1176"/>
    </location>
</feature>
<feature type="sequence conflict" description="In Ref. 1; AAG30223." evidence="10" ref="1">
    <original>T</original>
    <variation>R</variation>
    <location>
        <position position="1206"/>
    </location>
</feature>
<feature type="sequence conflict" description="In Ref. 1; AAG30223." evidence="10" ref="1">
    <original>R</original>
    <variation>P</variation>
    <location>
        <position position="1213"/>
    </location>
</feature>
<feature type="sequence conflict" description="In Ref. 1; AAG30223." evidence="10" ref="1">
    <original>S</original>
    <variation>F</variation>
    <location>
        <position position="1238"/>
    </location>
</feature>
<feature type="sequence conflict" description="In Ref. 1; AAG30223." evidence="10" ref="1">
    <original>D</original>
    <variation>E</variation>
    <location>
        <position position="1524"/>
    </location>
</feature>
<feature type="sequence conflict" description="In Ref. 1; AAG30223." evidence="10" ref="1">
    <original>Y</original>
    <variation>H</variation>
    <location>
        <position position="1611"/>
    </location>
</feature>
<feature type="sequence conflict" description="In Ref. 1; AAG30223." evidence="10" ref="1">
    <original>V</original>
    <variation>E</variation>
    <location>
        <position position="1852"/>
    </location>
</feature>
<feature type="sequence conflict" description="In Ref. 1; AAG30223." evidence="10" ref="1">
    <original>A</original>
    <variation>P</variation>
    <location>
        <position position="2025"/>
    </location>
</feature>
<gene>
    <name evidence="14" type="primary">PolZ1</name>
    <name evidence="11" type="synonym">Dmpolzeta</name>
    <name evidence="10" type="synonym">DNApol-zeta</name>
    <name evidence="10" type="synonym">DNApolZ1</name>
    <name evidence="8" type="synonym">mus205</name>
    <name evidence="9" type="synonym">rev3</name>
    <name evidence="14" type="ORF">CG1925</name>
</gene>